<organism>
    <name type="scientific">Baumannia cicadellinicola subsp. Homalodisca coagulata</name>
    <dbReference type="NCBI Taxonomy" id="374463"/>
    <lineage>
        <taxon>Bacteria</taxon>
        <taxon>Pseudomonadati</taxon>
        <taxon>Pseudomonadota</taxon>
        <taxon>Gammaproteobacteria</taxon>
        <taxon>Candidatus Palibaumannia</taxon>
    </lineage>
</organism>
<reference key="1">
    <citation type="journal article" date="2006" name="PLoS Biol.">
        <title>Metabolic complementarity and genomics of the dual bacterial symbiosis of sharpshooters.</title>
        <authorList>
            <person name="Wu D."/>
            <person name="Daugherty S.C."/>
            <person name="Van Aken S.E."/>
            <person name="Pai G.H."/>
            <person name="Watkins K.L."/>
            <person name="Khouri H."/>
            <person name="Tallon L.J."/>
            <person name="Zaborsky J.M."/>
            <person name="Dunbar H.E."/>
            <person name="Tran P.L."/>
            <person name="Moran N.A."/>
            <person name="Eisen J.A."/>
        </authorList>
    </citation>
    <scope>NUCLEOTIDE SEQUENCE [LARGE SCALE GENOMIC DNA]</scope>
</reference>
<name>RL35_BAUCH</name>
<gene>
    <name evidence="1" type="primary">rpmI</name>
    <name type="ordered locus">BCI_0470</name>
</gene>
<proteinExistence type="inferred from homology"/>
<accession>Q1LT06</accession>
<sequence>MPKLKSVRGAVKRFKKNSSGCFKHKQAYLRHLLTKKSTNRKRNLRFKSIVSKGDKNLVVRCLPYA</sequence>
<keyword id="KW-1185">Reference proteome</keyword>
<keyword id="KW-0687">Ribonucleoprotein</keyword>
<keyword id="KW-0689">Ribosomal protein</keyword>
<dbReference type="EMBL" id="CP000238">
    <property type="protein sequence ID" value="ABF14183.1"/>
    <property type="molecule type" value="Genomic_DNA"/>
</dbReference>
<dbReference type="RefSeq" id="WP_011520641.1">
    <property type="nucleotide sequence ID" value="NC_007984.1"/>
</dbReference>
<dbReference type="SMR" id="Q1LT06"/>
<dbReference type="STRING" id="374463.BCI_0470"/>
<dbReference type="KEGG" id="bci:BCI_0470"/>
<dbReference type="HOGENOM" id="CLU_169643_1_1_6"/>
<dbReference type="OrthoDB" id="47476at2"/>
<dbReference type="Proteomes" id="UP000002427">
    <property type="component" value="Chromosome"/>
</dbReference>
<dbReference type="GO" id="GO:0022625">
    <property type="term" value="C:cytosolic large ribosomal subunit"/>
    <property type="evidence" value="ECO:0007669"/>
    <property type="project" value="TreeGrafter"/>
</dbReference>
<dbReference type="GO" id="GO:0003735">
    <property type="term" value="F:structural constituent of ribosome"/>
    <property type="evidence" value="ECO:0007669"/>
    <property type="project" value="InterPro"/>
</dbReference>
<dbReference type="GO" id="GO:0006412">
    <property type="term" value="P:translation"/>
    <property type="evidence" value="ECO:0007669"/>
    <property type="project" value="UniProtKB-UniRule"/>
</dbReference>
<dbReference type="FunFam" id="4.10.410.60:FF:000001">
    <property type="entry name" value="50S ribosomal protein L35"/>
    <property type="match status" value="1"/>
</dbReference>
<dbReference type="Gene3D" id="4.10.410.60">
    <property type="match status" value="1"/>
</dbReference>
<dbReference type="HAMAP" id="MF_00514">
    <property type="entry name" value="Ribosomal_bL35"/>
    <property type="match status" value="1"/>
</dbReference>
<dbReference type="InterPro" id="IPR001706">
    <property type="entry name" value="Ribosomal_bL35"/>
</dbReference>
<dbReference type="InterPro" id="IPR021137">
    <property type="entry name" value="Ribosomal_bL35-like"/>
</dbReference>
<dbReference type="InterPro" id="IPR018265">
    <property type="entry name" value="Ribosomal_bL35_CS"/>
</dbReference>
<dbReference type="InterPro" id="IPR037229">
    <property type="entry name" value="Ribosomal_bL35_sf"/>
</dbReference>
<dbReference type="NCBIfam" id="TIGR00001">
    <property type="entry name" value="rpmI_bact"/>
    <property type="match status" value="1"/>
</dbReference>
<dbReference type="PANTHER" id="PTHR33343">
    <property type="entry name" value="54S RIBOSOMAL PROTEIN BL35M"/>
    <property type="match status" value="1"/>
</dbReference>
<dbReference type="PANTHER" id="PTHR33343:SF1">
    <property type="entry name" value="LARGE RIBOSOMAL SUBUNIT PROTEIN BL35M"/>
    <property type="match status" value="1"/>
</dbReference>
<dbReference type="Pfam" id="PF01632">
    <property type="entry name" value="Ribosomal_L35p"/>
    <property type="match status" value="1"/>
</dbReference>
<dbReference type="PRINTS" id="PR00064">
    <property type="entry name" value="RIBOSOMALL35"/>
</dbReference>
<dbReference type="SUPFAM" id="SSF143034">
    <property type="entry name" value="L35p-like"/>
    <property type="match status" value="1"/>
</dbReference>
<dbReference type="PROSITE" id="PS00936">
    <property type="entry name" value="RIBOSOMAL_L35"/>
    <property type="match status" value="1"/>
</dbReference>
<protein>
    <recommendedName>
        <fullName evidence="1">Large ribosomal subunit protein bL35</fullName>
    </recommendedName>
    <alternativeName>
        <fullName evidence="2">50S ribosomal protein L35</fullName>
    </alternativeName>
</protein>
<feature type="chain" id="PRO_0000258640" description="Large ribosomal subunit protein bL35">
    <location>
        <begin position="1"/>
        <end position="65"/>
    </location>
</feature>
<evidence type="ECO:0000255" key="1">
    <source>
        <dbReference type="HAMAP-Rule" id="MF_00514"/>
    </source>
</evidence>
<evidence type="ECO:0000305" key="2"/>
<comment type="similarity">
    <text evidence="1">Belongs to the bacterial ribosomal protein bL35 family.</text>
</comment>